<name>CSRA_PSYWF</name>
<feature type="chain" id="PRO_1000071570" description="Translational regulator CsrA">
    <location>
        <begin position="1"/>
        <end position="81"/>
    </location>
</feature>
<feature type="region of interest" description="Disordered" evidence="2">
    <location>
        <begin position="59"/>
        <end position="81"/>
    </location>
</feature>
<feature type="compositionally biased region" description="Polar residues" evidence="2">
    <location>
        <begin position="59"/>
        <end position="71"/>
    </location>
</feature>
<protein>
    <recommendedName>
        <fullName evidence="1">Translational regulator CsrA</fullName>
    </recommendedName>
    <alternativeName>
        <fullName evidence="1">Carbon storage regulator</fullName>
    </alternativeName>
</protein>
<comment type="function">
    <text evidence="1">A key translational regulator that binds mRNA to regulate translation initiation and/or mRNA stability. Mediates global changes in gene expression, shifting from rapid growth to stress survival by linking envelope stress, the stringent response and the catabolite repression systems. Usually binds in the 5'-UTR; binding at or near the Shine-Dalgarno sequence prevents ribosome-binding, repressing translation, binding elsewhere in the 5'-UTR can activate translation and/or stabilize the mRNA. Its function is antagonized by small RNA(s).</text>
</comment>
<comment type="subunit">
    <text evidence="1">Homodimer; the beta-strands of each monomer intercalate to form a hydrophobic core, while the alpha-helices form wings that extend away from the core.</text>
</comment>
<comment type="subcellular location">
    <subcellularLocation>
        <location evidence="1">Cytoplasm</location>
    </subcellularLocation>
</comment>
<comment type="similarity">
    <text evidence="1">Belongs to the CsrA/RsmA family.</text>
</comment>
<dbReference type="EMBL" id="CP000713">
    <property type="protein sequence ID" value="ABQ94554.1"/>
    <property type="molecule type" value="Genomic_DNA"/>
</dbReference>
<dbReference type="SMR" id="A5WFW3"/>
<dbReference type="STRING" id="349106.PsycPRwf_1613"/>
<dbReference type="KEGG" id="prw:PsycPRwf_1613"/>
<dbReference type="eggNOG" id="COG1551">
    <property type="taxonomic scope" value="Bacteria"/>
</dbReference>
<dbReference type="HOGENOM" id="CLU_164837_2_1_6"/>
<dbReference type="GO" id="GO:0005829">
    <property type="term" value="C:cytosol"/>
    <property type="evidence" value="ECO:0007669"/>
    <property type="project" value="TreeGrafter"/>
</dbReference>
<dbReference type="GO" id="GO:0048027">
    <property type="term" value="F:mRNA 5'-UTR binding"/>
    <property type="evidence" value="ECO:0007669"/>
    <property type="project" value="UniProtKB-UniRule"/>
</dbReference>
<dbReference type="GO" id="GO:0006402">
    <property type="term" value="P:mRNA catabolic process"/>
    <property type="evidence" value="ECO:0007669"/>
    <property type="project" value="InterPro"/>
</dbReference>
<dbReference type="GO" id="GO:0045947">
    <property type="term" value="P:negative regulation of translational initiation"/>
    <property type="evidence" value="ECO:0007669"/>
    <property type="project" value="UniProtKB-UniRule"/>
</dbReference>
<dbReference type="GO" id="GO:0045948">
    <property type="term" value="P:positive regulation of translational initiation"/>
    <property type="evidence" value="ECO:0007669"/>
    <property type="project" value="UniProtKB-UniRule"/>
</dbReference>
<dbReference type="GO" id="GO:0006109">
    <property type="term" value="P:regulation of carbohydrate metabolic process"/>
    <property type="evidence" value="ECO:0007669"/>
    <property type="project" value="UniProtKB-UniRule"/>
</dbReference>
<dbReference type="FunFam" id="2.60.40.4380:FF:000001">
    <property type="entry name" value="Translational regulator CsrA"/>
    <property type="match status" value="1"/>
</dbReference>
<dbReference type="Gene3D" id="2.60.40.4380">
    <property type="entry name" value="Translational regulator CsrA"/>
    <property type="match status" value="1"/>
</dbReference>
<dbReference type="HAMAP" id="MF_00167">
    <property type="entry name" value="CsrA"/>
    <property type="match status" value="1"/>
</dbReference>
<dbReference type="InterPro" id="IPR003751">
    <property type="entry name" value="CsrA"/>
</dbReference>
<dbReference type="InterPro" id="IPR036107">
    <property type="entry name" value="CsrA_sf"/>
</dbReference>
<dbReference type="NCBIfam" id="TIGR00202">
    <property type="entry name" value="csrA"/>
    <property type="match status" value="1"/>
</dbReference>
<dbReference type="NCBIfam" id="NF002469">
    <property type="entry name" value="PRK01712.1"/>
    <property type="match status" value="1"/>
</dbReference>
<dbReference type="PANTHER" id="PTHR34984">
    <property type="entry name" value="CARBON STORAGE REGULATOR"/>
    <property type="match status" value="1"/>
</dbReference>
<dbReference type="PANTHER" id="PTHR34984:SF1">
    <property type="entry name" value="CARBON STORAGE REGULATOR"/>
    <property type="match status" value="1"/>
</dbReference>
<dbReference type="Pfam" id="PF02599">
    <property type="entry name" value="CsrA"/>
    <property type="match status" value="1"/>
</dbReference>
<dbReference type="SUPFAM" id="SSF117130">
    <property type="entry name" value="CsrA-like"/>
    <property type="match status" value="1"/>
</dbReference>
<gene>
    <name evidence="1" type="primary">csrA</name>
    <name type="ordered locus">PsycPRwf_1613</name>
</gene>
<proteinExistence type="inferred from homology"/>
<reference key="1">
    <citation type="submission" date="2007-05" db="EMBL/GenBank/DDBJ databases">
        <title>Complete sequence of chromosome of Psychrobacter sp. PRwf-1.</title>
        <authorList>
            <consortium name="US DOE Joint Genome Institute"/>
            <person name="Copeland A."/>
            <person name="Lucas S."/>
            <person name="Lapidus A."/>
            <person name="Barry K."/>
            <person name="Detter J.C."/>
            <person name="Glavina del Rio T."/>
            <person name="Hammon N."/>
            <person name="Israni S."/>
            <person name="Dalin E."/>
            <person name="Tice H."/>
            <person name="Pitluck S."/>
            <person name="Chain P."/>
            <person name="Malfatti S."/>
            <person name="Shin M."/>
            <person name="Vergez L."/>
            <person name="Schmutz J."/>
            <person name="Larimer F."/>
            <person name="Land M."/>
            <person name="Hauser L."/>
            <person name="Kyrpides N."/>
            <person name="Kim E."/>
            <person name="Tiedje J."/>
            <person name="Richardson P."/>
        </authorList>
    </citation>
    <scope>NUCLEOTIDE SEQUENCE [LARGE SCALE GENOMIC DNA]</scope>
    <source>
        <strain>PRwf-1</strain>
    </source>
</reference>
<keyword id="KW-0010">Activator</keyword>
<keyword id="KW-0963">Cytoplasm</keyword>
<keyword id="KW-0678">Repressor</keyword>
<keyword id="KW-0694">RNA-binding</keyword>
<keyword id="KW-0810">Translation regulation</keyword>
<organism>
    <name type="scientific">Psychrobacter sp. (strain PRwf-1)</name>
    <dbReference type="NCBI Taxonomy" id="349106"/>
    <lineage>
        <taxon>Bacteria</taxon>
        <taxon>Pseudomonadati</taxon>
        <taxon>Pseudomonadota</taxon>
        <taxon>Gammaproteobacteria</taxon>
        <taxon>Moraxellales</taxon>
        <taxon>Moraxellaceae</taxon>
        <taxon>Psychrobacter</taxon>
    </lineage>
</organism>
<evidence type="ECO:0000255" key="1">
    <source>
        <dbReference type="HAMAP-Rule" id="MF_00167"/>
    </source>
</evidence>
<evidence type="ECO:0000256" key="2">
    <source>
        <dbReference type="SAM" id="MobiDB-lite"/>
    </source>
</evidence>
<sequence>MLILTRRVGETLMVGDEVSVTVLGVKGNQVRIGVNAPKDIAVHREEIYQRIQHERAMQSQMQHLEQGNFPTSFDDDDFFNR</sequence>
<accession>A5WFW3</accession>